<comment type="function">
    <text evidence="1">Catalyzes the isomerization between 2-isopropylmalate and 3-isopropylmalate, via the formation of 2-isopropylmaleate.</text>
</comment>
<comment type="catalytic activity">
    <reaction evidence="1">
        <text>(2R,3S)-3-isopropylmalate = (2S)-2-isopropylmalate</text>
        <dbReference type="Rhea" id="RHEA:32287"/>
        <dbReference type="ChEBI" id="CHEBI:1178"/>
        <dbReference type="ChEBI" id="CHEBI:35121"/>
        <dbReference type="EC" id="4.2.1.33"/>
    </reaction>
</comment>
<comment type="pathway">
    <text evidence="1">Amino-acid biosynthesis; L-leucine biosynthesis; L-leucine from 3-methyl-2-oxobutanoate: step 2/4.</text>
</comment>
<comment type="subunit">
    <text evidence="1">Heterodimer of LeuC and LeuD.</text>
</comment>
<comment type="similarity">
    <text evidence="1">Belongs to the LeuD family. LeuD type 1 subfamily.</text>
</comment>
<evidence type="ECO:0000255" key="1">
    <source>
        <dbReference type="HAMAP-Rule" id="MF_01031"/>
    </source>
</evidence>
<proteinExistence type="inferred from homology"/>
<feature type="chain" id="PRO_1000135818" description="3-isopropylmalate dehydratase small subunit">
    <location>
        <begin position="1"/>
        <end position="200"/>
    </location>
</feature>
<dbReference type="EC" id="4.2.1.33" evidence="1"/>
<dbReference type="EMBL" id="CP001001">
    <property type="protein sequence ID" value="ACB22973.1"/>
    <property type="molecule type" value="Genomic_DNA"/>
</dbReference>
<dbReference type="RefSeq" id="WP_012317966.1">
    <property type="nucleotide sequence ID" value="NC_010505.1"/>
</dbReference>
<dbReference type="SMR" id="B1LZS5"/>
<dbReference type="STRING" id="426355.Mrad2831_0963"/>
<dbReference type="GeneID" id="6136980"/>
<dbReference type="KEGG" id="mrd:Mrad2831_0963"/>
<dbReference type="PATRIC" id="fig|426355.14.peg.1004"/>
<dbReference type="eggNOG" id="COG0066">
    <property type="taxonomic scope" value="Bacteria"/>
</dbReference>
<dbReference type="HOGENOM" id="CLU_081378_0_3_5"/>
<dbReference type="OrthoDB" id="9777465at2"/>
<dbReference type="UniPathway" id="UPA00048">
    <property type="reaction ID" value="UER00071"/>
</dbReference>
<dbReference type="Proteomes" id="UP000006589">
    <property type="component" value="Chromosome"/>
</dbReference>
<dbReference type="GO" id="GO:0009316">
    <property type="term" value="C:3-isopropylmalate dehydratase complex"/>
    <property type="evidence" value="ECO:0007669"/>
    <property type="project" value="InterPro"/>
</dbReference>
<dbReference type="GO" id="GO:0003861">
    <property type="term" value="F:3-isopropylmalate dehydratase activity"/>
    <property type="evidence" value="ECO:0007669"/>
    <property type="project" value="UniProtKB-UniRule"/>
</dbReference>
<dbReference type="GO" id="GO:0009098">
    <property type="term" value="P:L-leucine biosynthetic process"/>
    <property type="evidence" value="ECO:0007669"/>
    <property type="project" value="UniProtKB-UniRule"/>
</dbReference>
<dbReference type="CDD" id="cd01577">
    <property type="entry name" value="IPMI_Swivel"/>
    <property type="match status" value="1"/>
</dbReference>
<dbReference type="FunFam" id="3.20.19.10:FF:000003">
    <property type="entry name" value="3-isopropylmalate dehydratase small subunit"/>
    <property type="match status" value="1"/>
</dbReference>
<dbReference type="Gene3D" id="3.20.19.10">
    <property type="entry name" value="Aconitase, domain 4"/>
    <property type="match status" value="1"/>
</dbReference>
<dbReference type="HAMAP" id="MF_01031">
    <property type="entry name" value="LeuD_type1"/>
    <property type="match status" value="1"/>
</dbReference>
<dbReference type="InterPro" id="IPR004431">
    <property type="entry name" value="3-IsopropMal_deHydase_ssu"/>
</dbReference>
<dbReference type="InterPro" id="IPR015928">
    <property type="entry name" value="Aconitase/3IPM_dehydase_swvl"/>
</dbReference>
<dbReference type="InterPro" id="IPR000573">
    <property type="entry name" value="AconitaseA/IPMdHydase_ssu_swvl"/>
</dbReference>
<dbReference type="InterPro" id="IPR033940">
    <property type="entry name" value="IPMI_Swivel"/>
</dbReference>
<dbReference type="InterPro" id="IPR050075">
    <property type="entry name" value="LeuD"/>
</dbReference>
<dbReference type="NCBIfam" id="TIGR00171">
    <property type="entry name" value="leuD"/>
    <property type="match status" value="1"/>
</dbReference>
<dbReference type="NCBIfam" id="NF002458">
    <property type="entry name" value="PRK01641.1"/>
    <property type="match status" value="1"/>
</dbReference>
<dbReference type="PANTHER" id="PTHR43345:SF5">
    <property type="entry name" value="3-ISOPROPYLMALATE DEHYDRATASE SMALL SUBUNIT"/>
    <property type="match status" value="1"/>
</dbReference>
<dbReference type="PANTHER" id="PTHR43345">
    <property type="entry name" value="3-ISOPROPYLMALATE DEHYDRATASE SMALL SUBUNIT 2-RELATED-RELATED"/>
    <property type="match status" value="1"/>
</dbReference>
<dbReference type="Pfam" id="PF00694">
    <property type="entry name" value="Aconitase_C"/>
    <property type="match status" value="1"/>
</dbReference>
<dbReference type="SUPFAM" id="SSF52016">
    <property type="entry name" value="LeuD/IlvD-like"/>
    <property type="match status" value="1"/>
</dbReference>
<reference key="1">
    <citation type="submission" date="2008-03" db="EMBL/GenBank/DDBJ databases">
        <title>Complete sequence of chromosome of Methylobacterium radiotolerans JCM 2831.</title>
        <authorList>
            <consortium name="US DOE Joint Genome Institute"/>
            <person name="Copeland A."/>
            <person name="Lucas S."/>
            <person name="Lapidus A."/>
            <person name="Glavina del Rio T."/>
            <person name="Dalin E."/>
            <person name="Tice H."/>
            <person name="Bruce D."/>
            <person name="Goodwin L."/>
            <person name="Pitluck S."/>
            <person name="Kiss H."/>
            <person name="Brettin T."/>
            <person name="Detter J.C."/>
            <person name="Han C."/>
            <person name="Kuske C.R."/>
            <person name="Schmutz J."/>
            <person name="Larimer F."/>
            <person name="Land M."/>
            <person name="Hauser L."/>
            <person name="Kyrpides N."/>
            <person name="Mikhailova N."/>
            <person name="Marx C.J."/>
            <person name="Richardson P."/>
        </authorList>
    </citation>
    <scope>NUCLEOTIDE SEQUENCE [LARGE SCALE GENOMIC DNA]</scope>
    <source>
        <strain>ATCC 27329 / DSM 1819 / JCM 2831 / NBRC 15690 / NCIMB 10815 / 0-1</strain>
    </source>
</reference>
<sequence>MEKFTTLEGVAAPLRTINVDTDRIIPAKYLKTIRRTGLGKSLFAEMRYREDGSENPDFILNQPAYRNSKILVCGDNFGCGSSREHAPWALADFGIRCVISTSFADIFFNNCAKNGILAIVVSPEDLEKLFEDAERGANATLTVDLAAQTIRGPDGGTLHFDVDEGRKHNLLNGLDEIGLTLERVSSIDAYEQKLAQRTWA</sequence>
<keyword id="KW-0028">Amino-acid biosynthesis</keyword>
<keyword id="KW-0100">Branched-chain amino acid biosynthesis</keyword>
<keyword id="KW-0432">Leucine biosynthesis</keyword>
<keyword id="KW-0456">Lyase</keyword>
<accession>B1LZS5</accession>
<organism>
    <name type="scientific">Methylobacterium radiotolerans (strain ATCC 27329 / DSM 1819 / JCM 2831 / NBRC 15690 / NCIMB 10815 / 0-1)</name>
    <dbReference type="NCBI Taxonomy" id="426355"/>
    <lineage>
        <taxon>Bacteria</taxon>
        <taxon>Pseudomonadati</taxon>
        <taxon>Pseudomonadota</taxon>
        <taxon>Alphaproteobacteria</taxon>
        <taxon>Hyphomicrobiales</taxon>
        <taxon>Methylobacteriaceae</taxon>
        <taxon>Methylobacterium</taxon>
    </lineage>
</organism>
<protein>
    <recommendedName>
        <fullName evidence="1">3-isopropylmalate dehydratase small subunit</fullName>
        <ecNumber evidence="1">4.2.1.33</ecNumber>
    </recommendedName>
    <alternativeName>
        <fullName evidence="1">Alpha-IPM isomerase</fullName>
        <shortName evidence="1">IPMI</shortName>
    </alternativeName>
    <alternativeName>
        <fullName evidence="1">Isopropylmalate isomerase</fullName>
    </alternativeName>
</protein>
<gene>
    <name evidence="1" type="primary">leuD</name>
    <name type="ordered locus">Mrad2831_0963</name>
</gene>
<name>LEUD_METRJ</name>